<organism>
    <name type="scientific">Homo sapiens</name>
    <name type="common">Human</name>
    <dbReference type="NCBI Taxonomy" id="9606"/>
    <lineage>
        <taxon>Eukaryota</taxon>
        <taxon>Metazoa</taxon>
        <taxon>Chordata</taxon>
        <taxon>Craniata</taxon>
        <taxon>Vertebrata</taxon>
        <taxon>Euteleostomi</taxon>
        <taxon>Mammalia</taxon>
        <taxon>Eutheria</taxon>
        <taxon>Euarchontoglires</taxon>
        <taxon>Primates</taxon>
        <taxon>Haplorrhini</taxon>
        <taxon>Catarrhini</taxon>
        <taxon>Hominidae</taxon>
        <taxon>Homo</taxon>
    </lineage>
</organism>
<dbReference type="EMBL" id="AC004166">
    <property type="status" value="NOT_ANNOTATED_CDS"/>
    <property type="molecule type" value="Genomic_DNA"/>
</dbReference>
<dbReference type="EMBL" id="BC027480">
    <property type="status" value="NOT_ANNOTATED_CDS"/>
    <property type="molecule type" value="mRNA"/>
</dbReference>
<dbReference type="SMR" id="A8MQ11"/>
<dbReference type="IntAct" id="A8MQ11">
    <property type="interactions" value="1"/>
</dbReference>
<dbReference type="BioMuta" id="HGNC:9130"/>
<dbReference type="jPOST" id="A8MQ11"/>
<dbReference type="MassIVE" id="A8MQ11"/>
<dbReference type="PeptideAtlas" id="A8MQ11"/>
<dbReference type="AGR" id="HGNC:9130"/>
<dbReference type="GeneCards" id="PMS2P5"/>
<dbReference type="HGNC" id="HGNC:9130">
    <property type="gene designation" value="PMS2P5"/>
</dbReference>
<dbReference type="neXtProt" id="NX_A8MQ11"/>
<dbReference type="InParanoid" id="A8MQ11"/>
<dbReference type="PAN-GO" id="A8MQ11">
    <property type="GO annotations" value="4 GO annotations based on evolutionary models"/>
</dbReference>
<dbReference type="PhylomeDB" id="A8MQ11"/>
<dbReference type="PathwayCommons" id="A8MQ11"/>
<dbReference type="SignaLink" id="A8MQ11"/>
<dbReference type="ChiTaRS" id="PMS2P5">
    <property type="organism name" value="human"/>
</dbReference>
<dbReference type="Pharos" id="A8MQ11">
    <property type="development level" value="Tdark"/>
</dbReference>
<dbReference type="PRO" id="PR:A8MQ11"/>
<dbReference type="Proteomes" id="UP000005640">
    <property type="component" value="Unplaced"/>
</dbReference>
<dbReference type="RNAct" id="A8MQ11">
    <property type="molecule type" value="protein"/>
</dbReference>
<dbReference type="GO" id="GO:0032300">
    <property type="term" value="C:mismatch repair complex"/>
    <property type="evidence" value="ECO:0007669"/>
    <property type="project" value="InterPro"/>
</dbReference>
<dbReference type="GO" id="GO:0016887">
    <property type="term" value="F:ATP hydrolysis activity"/>
    <property type="evidence" value="ECO:0007669"/>
    <property type="project" value="InterPro"/>
</dbReference>
<dbReference type="GO" id="GO:0140664">
    <property type="term" value="F:ATP-dependent DNA damage sensor activity"/>
    <property type="evidence" value="ECO:0007669"/>
    <property type="project" value="InterPro"/>
</dbReference>
<dbReference type="GO" id="GO:0006298">
    <property type="term" value="P:mismatch repair"/>
    <property type="evidence" value="ECO:0007669"/>
    <property type="project" value="InterPro"/>
</dbReference>
<dbReference type="Gene3D" id="3.30.565.10">
    <property type="entry name" value="Histidine kinase-like ATPase, C-terminal domain"/>
    <property type="match status" value="1"/>
</dbReference>
<dbReference type="InterPro" id="IPR036890">
    <property type="entry name" value="HATPase_C_sf"/>
</dbReference>
<dbReference type="InterPro" id="IPR038973">
    <property type="entry name" value="MutL/Mlh/Pms-like"/>
</dbReference>
<dbReference type="PANTHER" id="PTHR10073">
    <property type="entry name" value="DNA MISMATCH REPAIR PROTEIN MLH, PMS, MUTL"/>
    <property type="match status" value="1"/>
</dbReference>
<dbReference type="PANTHER" id="PTHR10073:SF52">
    <property type="entry name" value="MISMATCH REPAIR ENDONUCLEASE PMS2"/>
    <property type="match status" value="1"/>
</dbReference>
<dbReference type="SUPFAM" id="SSF55874">
    <property type="entry name" value="ATPase domain of HSP90 chaperone/DNA topoisomerase II/histidine kinase"/>
    <property type="match status" value="1"/>
</dbReference>
<name>PM2P5_HUMAN</name>
<gene>
    <name type="primary">PMS2P5</name>
    <name type="synonym">PMS2L5</name>
    <name type="synonym">PMS4</name>
    <name type="synonym">PMS7</name>
</gene>
<reference key="1">
    <citation type="journal article" date="2003" name="Nature">
        <title>The DNA sequence of human chromosome 7.</title>
        <authorList>
            <person name="Hillier L.W."/>
            <person name="Fulton R.S."/>
            <person name="Fulton L.A."/>
            <person name="Graves T.A."/>
            <person name="Pepin K.H."/>
            <person name="Wagner-McPherson C."/>
            <person name="Layman D."/>
            <person name="Maas J."/>
            <person name="Jaeger S."/>
            <person name="Walker R."/>
            <person name="Wylie K."/>
            <person name="Sekhon M."/>
            <person name="Becker M.C."/>
            <person name="O'Laughlin M.D."/>
            <person name="Schaller M.E."/>
            <person name="Fewell G.A."/>
            <person name="Delehaunty K.D."/>
            <person name="Miner T.L."/>
            <person name="Nash W.E."/>
            <person name="Cordes M."/>
            <person name="Du H."/>
            <person name="Sun H."/>
            <person name="Edwards J."/>
            <person name="Bradshaw-Cordum H."/>
            <person name="Ali J."/>
            <person name="Andrews S."/>
            <person name="Isak A."/>
            <person name="Vanbrunt A."/>
            <person name="Nguyen C."/>
            <person name="Du F."/>
            <person name="Lamar B."/>
            <person name="Courtney L."/>
            <person name="Kalicki J."/>
            <person name="Ozersky P."/>
            <person name="Bielicki L."/>
            <person name="Scott K."/>
            <person name="Holmes A."/>
            <person name="Harkins R."/>
            <person name="Harris A."/>
            <person name="Strong C.M."/>
            <person name="Hou S."/>
            <person name="Tomlinson C."/>
            <person name="Dauphin-Kohlberg S."/>
            <person name="Kozlowicz-Reilly A."/>
            <person name="Leonard S."/>
            <person name="Rohlfing T."/>
            <person name="Rock S.M."/>
            <person name="Tin-Wollam A.-M."/>
            <person name="Abbott A."/>
            <person name="Minx P."/>
            <person name="Maupin R."/>
            <person name="Strowmatt C."/>
            <person name="Latreille P."/>
            <person name="Miller N."/>
            <person name="Johnson D."/>
            <person name="Murray J."/>
            <person name="Woessner J.P."/>
            <person name="Wendl M.C."/>
            <person name="Yang S.-P."/>
            <person name="Schultz B.R."/>
            <person name="Wallis J.W."/>
            <person name="Spieth J."/>
            <person name="Bieri T.A."/>
            <person name="Nelson J.O."/>
            <person name="Berkowicz N."/>
            <person name="Wohldmann P.E."/>
            <person name="Cook L.L."/>
            <person name="Hickenbotham M.T."/>
            <person name="Eldred J."/>
            <person name="Williams D."/>
            <person name="Bedell J.A."/>
            <person name="Mardis E.R."/>
            <person name="Clifton S.W."/>
            <person name="Chissoe S.L."/>
            <person name="Marra M.A."/>
            <person name="Raymond C."/>
            <person name="Haugen E."/>
            <person name="Gillett W."/>
            <person name="Zhou Y."/>
            <person name="James R."/>
            <person name="Phelps K."/>
            <person name="Iadanoto S."/>
            <person name="Bubb K."/>
            <person name="Simms E."/>
            <person name="Levy R."/>
            <person name="Clendenning J."/>
            <person name="Kaul R."/>
            <person name="Kent W.J."/>
            <person name="Furey T.S."/>
            <person name="Baertsch R.A."/>
            <person name="Brent M.R."/>
            <person name="Keibler E."/>
            <person name="Flicek P."/>
            <person name="Bork P."/>
            <person name="Suyama M."/>
            <person name="Bailey J.A."/>
            <person name="Portnoy M.E."/>
            <person name="Torrents D."/>
            <person name="Chinwalla A.T."/>
            <person name="Gish W.R."/>
            <person name="Eddy S.R."/>
            <person name="McPherson J.D."/>
            <person name="Olson M.V."/>
            <person name="Eichler E.E."/>
            <person name="Green E.D."/>
            <person name="Waterston R.H."/>
            <person name="Wilson R.K."/>
        </authorList>
    </citation>
    <scope>NUCLEOTIDE SEQUENCE [LARGE SCALE GENOMIC DNA]</scope>
</reference>
<reference key="2">
    <citation type="journal article" date="2004" name="Genome Res.">
        <title>The status, quality, and expansion of the NIH full-length cDNA project: the Mammalian Gene Collection (MGC).</title>
        <authorList>
            <consortium name="The MGC Project Team"/>
        </authorList>
    </citation>
    <scope>NUCLEOTIDE SEQUENCE [LARGE SCALE MRNA]</scope>
    <source>
        <tissue>Duodenum</tissue>
    </source>
</reference>
<reference key="3">
    <citation type="journal article" date="1994" name="Biochem. Biophys. Res. Commun.">
        <title>Cloning, characterization and chromosomal assignment of the human genes homologous to yeast PMS1, a member of mismatch repair genes.</title>
        <authorList>
            <person name="Horii A."/>
            <person name="Han H.J."/>
            <person name="Sasaki S."/>
            <person name="Shimada M."/>
            <person name="Nakamura Y."/>
        </authorList>
    </citation>
    <scope>GENE FAMILY</scope>
</reference>
<keyword id="KW-1185">Reference proteome</keyword>
<evidence type="ECO:0000305" key="1"/>
<accession>A8MQ11</accession>
<comment type="miscellaneous">
    <text>Encoded by one of the numerous copies of postmeiotic segregation increased 2-like genes scattered in the q11-q22 region of the chromosome 7.</text>
</comment>
<comment type="similarity">
    <text evidence="1">Belongs to the DNA mismatch repair MutL/HexB family.</text>
</comment>
<comment type="caution">
    <text evidence="1">Could be the product of a pseudogene.</text>
</comment>
<feature type="chain" id="PRO_0000334619" description="Postmeiotic segregation increased 2-like protein 5">
    <location>
        <begin position="1"/>
        <end position="134"/>
    </location>
</feature>
<sequence length="134" mass="15170">MWGRRRKLRRLNDVTISTCHVSAKVGTRLVFDHDGKIIQKTPYPHPRGTTVSVKQLFSTLPVRHKEFQRNIKKKRACFPFAFCRDCQFLEGSPAMLPVQPAKLTPRSTPPHPCSLEDNVITVFSSVKNGPGSSR</sequence>
<protein>
    <recommendedName>
        <fullName>Postmeiotic segregation increased 2-like protein 5</fullName>
    </recommendedName>
    <alternativeName>
        <fullName>Postmeiotic segregation increased protein 4</fullName>
    </alternativeName>
    <alternativeName>
        <fullName>Postmeiotic segregation increased protein 7</fullName>
    </alternativeName>
    <alternativeName>
        <fullName>Putative postmeiotic segregation increased 2 pseudogene 5</fullName>
    </alternativeName>
</protein>
<proteinExistence type="uncertain"/>